<keyword id="KW-0938">Abscisic acid signaling pathway</keyword>
<keyword id="KW-0963">Cytoplasm</keyword>
<keyword id="KW-0539">Nucleus</keyword>
<keyword id="KW-0650">Protein phosphatase inhibitor</keyword>
<keyword id="KW-0675">Receptor</keyword>
<keyword id="KW-1185">Reference proteome</keyword>
<keyword id="KW-0346">Stress response</keyword>
<dbReference type="EMBL" id="AC060755">
    <property type="protein sequence ID" value="AAK00445.1"/>
    <property type="molecule type" value="Genomic_DNA"/>
</dbReference>
<dbReference type="EMBL" id="DP000086">
    <property type="protein sequence ID" value="AAP55122.1"/>
    <property type="molecule type" value="Genomic_DNA"/>
</dbReference>
<dbReference type="EMBL" id="AP008216">
    <property type="protein sequence ID" value="BAF27307.1"/>
    <property type="molecule type" value="Genomic_DNA"/>
</dbReference>
<dbReference type="EMBL" id="AP014966">
    <property type="protein sequence ID" value="BAT12177.1"/>
    <property type="molecule type" value="Genomic_DNA"/>
</dbReference>
<dbReference type="EMBL" id="CM000147">
    <property type="protein sequence ID" value="EAZ17061.1"/>
    <property type="molecule type" value="Genomic_DNA"/>
</dbReference>
<dbReference type="SMR" id="Q7XBY6"/>
<dbReference type="FunCoup" id="Q7XBY6">
    <property type="interactions" value="994"/>
</dbReference>
<dbReference type="STRING" id="39947.Q7XBY6"/>
<dbReference type="PaxDb" id="39947-Q7XBY6"/>
<dbReference type="EnsemblPlants" id="Os10t0573400-01">
    <property type="protein sequence ID" value="Os10t0573400-01"/>
    <property type="gene ID" value="Os10g0573400"/>
</dbReference>
<dbReference type="Gramene" id="Os10t0573400-01">
    <property type="protein sequence ID" value="Os10t0573400-01"/>
    <property type="gene ID" value="Os10g0573400"/>
</dbReference>
<dbReference type="KEGG" id="dosa:Os10g0573400"/>
<dbReference type="KEGG" id="osa:4349472"/>
<dbReference type="eggNOG" id="ENOG502QW1M">
    <property type="taxonomic scope" value="Eukaryota"/>
</dbReference>
<dbReference type="HOGENOM" id="CLU_077517_0_1_1"/>
<dbReference type="InParanoid" id="Q7XBY6"/>
<dbReference type="OMA" id="FHSYRIN"/>
<dbReference type="OrthoDB" id="4436220at2759"/>
<dbReference type="PlantReactome" id="R-OSA-3899351">
    <property type="pathway name" value="Abscisic acid (ABA) mediated signaling"/>
</dbReference>
<dbReference type="Proteomes" id="UP000000763">
    <property type="component" value="Chromosome 10"/>
</dbReference>
<dbReference type="Proteomes" id="UP000007752">
    <property type="component" value="Chromosome 10"/>
</dbReference>
<dbReference type="Proteomes" id="UP000059680">
    <property type="component" value="Chromosome 10"/>
</dbReference>
<dbReference type="GO" id="GO:0005737">
    <property type="term" value="C:cytoplasm"/>
    <property type="evidence" value="ECO:0000318"/>
    <property type="project" value="GO_Central"/>
</dbReference>
<dbReference type="GO" id="GO:0005829">
    <property type="term" value="C:cytosol"/>
    <property type="evidence" value="ECO:0000314"/>
    <property type="project" value="UniProtKB"/>
</dbReference>
<dbReference type="GO" id="GO:0005634">
    <property type="term" value="C:nucleus"/>
    <property type="evidence" value="ECO:0000314"/>
    <property type="project" value="UniProtKB"/>
</dbReference>
<dbReference type="GO" id="GO:0010427">
    <property type="term" value="F:abscisic acid binding"/>
    <property type="evidence" value="ECO:0000318"/>
    <property type="project" value="GO_Central"/>
</dbReference>
<dbReference type="GO" id="GO:0042803">
    <property type="term" value="F:protein homodimerization activity"/>
    <property type="evidence" value="ECO:0000314"/>
    <property type="project" value="UniProtKB"/>
</dbReference>
<dbReference type="GO" id="GO:0004864">
    <property type="term" value="F:protein phosphatase inhibitor activity"/>
    <property type="evidence" value="ECO:0000318"/>
    <property type="project" value="GO_Central"/>
</dbReference>
<dbReference type="GO" id="GO:0038023">
    <property type="term" value="F:signaling receptor activity"/>
    <property type="evidence" value="ECO:0000318"/>
    <property type="project" value="GO_Central"/>
</dbReference>
<dbReference type="GO" id="GO:0009738">
    <property type="term" value="P:abscisic acid-activated signaling pathway"/>
    <property type="evidence" value="ECO:0000314"/>
    <property type="project" value="UniProtKB"/>
</dbReference>
<dbReference type="CDD" id="cd07821">
    <property type="entry name" value="PYR_PYL_RCAR_like"/>
    <property type="match status" value="1"/>
</dbReference>
<dbReference type="Gene3D" id="3.30.530.20">
    <property type="match status" value="1"/>
</dbReference>
<dbReference type="InterPro" id="IPR050279">
    <property type="entry name" value="Plant_def-hormone_signal"/>
</dbReference>
<dbReference type="InterPro" id="IPR019587">
    <property type="entry name" value="Polyketide_cyclase/dehydratase"/>
</dbReference>
<dbReference type="InterPro" id="IPR023393">
    <property type="entry name" value="START-like_dom_sf"/>
</dbReference>
<dbReference type="PANTHER" id="PTHR31213:SF6">
    <property type="entry name" value="ABSCISIC ACID RECEPTOR PYR1"/>
    <property type="match status" value="1"/>
</dbReference>
<dbReference type="PANTHER" id="PTHR31213">
    <property type="entry name" value="OS08G0374000 PROTEIN-RELATED"/>
    <property type="match status" value="1"/>
</dbReference>
<dbReference type="Pfam" id="PF10604">
    <property type="entry name" value="Polyketide_cyc2"/>
    <property type="match status" value="1"/>
</dbReference>
<dbReference type="SUPFAM" id="SSF55961">
    <property type="entry name" value="Bet v1-like"/>
    <property type="match status" value="1"/>
</dbReference>
<gene>
    <name evidence="9" type="primary">PYL10</name>
    <name evidence="8" type="synonym">PYL1</name>
    <name evidence="9" type="synonym">RCAR10</name>
    <name evidence="13" type="ordered locus">Os10g0573400</name>
    <name evidence="12" type="ordered locus">LOC_Os10g42280</name>
    <name evidence="14" type="ORF">OsJ_32555</name>
    <name evidence="11" type="ORF">OSJNBa0003O19.2</name>
</gene>
<accession>Q7XBY6</accession>
<accession>Q9AYL5</accession>
<reference key="1">
    <citation type="journal article" date="2003" name="Science">
        <title>In-depth view of structure, activity, and evolution of rice chromosome 10.</title>
        <authorList>
            <person name="Yu Y."/>
            <person name="Rambo T."/>
            <person name="Currie J."/>
            <person name="Saski C."/>
            <person name="Kim H.-R."/>
            <person name="Collura K."/>
            <person name="Thompson S."/>
            <person name="Simmons J."/>
            <person name="Yang T.-J."/>
            <person name="Nah G."/>
            <person name="Patel A.J."/>
            <person name="Thurmond S."/>
            <person name="Henry D."/>
            <person name="Oates R."/>
            <person name="Palmer M."/>
            <person name="Pries G."/>
            <person name="Gibson J."/>
            <person name="Anderson H."/>
            <person name="Paradkar M."/>
            <person name="Crane L."/>
            <person name="Dale J."/>
            <person name="Carver M.B."/>
            <person name="Wood T."/>
            <person name="Frisch D."/>
            <person name="Engler F."/>
            <person name="Soderlund C."/>
            <person name="Palmer L.E."/>
            <person name="Teytelman L."/>
            <person name="Nascimento L."/>
            <person name="De la Bastide M."/>
            <person name="Spiegel L."/>
            <person name="Ware D."/>
            <person name="O'Shaughnessy A."/>
            <person name="Dike S."/>
            <person name="Dedhia N."/>
            <person name="Preston R."/>
            <person name="Huang E."/>
            <person name="Ferraro K."/>
            <person name="Kuit K."/>
            <person name="Miller B."/>
            <person name="Zutavern T."/>
            <person name="Katzenberger F."/>
            <person name="Muller S."/>
            <person name="Balija V."/>
            <person name="Martienssen R.A."/>
            <person name="Stein L."/>
            <person name="Minx P."/>
            <person name="Johnson D."/>
            <person name="Cordum H."/>
            <person name="Mardis E."/>
            <person name="Cheng Z."/>
            <person name="Jiang J."/>
            <person name="Wilson R."/>
            <person name="McCombie W.R."/>
            <person name="Wing R.A."/>
            <person name="Yuan Q."/>
            <person name="Ouyang S."/>
            <person name="Liu J."/>
            <person name="Jones K.M."/>
            <person name="Gansberger K."/>
            <person name="Moffat K."/>
            <person name="Hill J."/>
            <person name="Tsitrin T."/>
            <person name="Overton L."/>
            <person name="Bera J."/>
            <person name="Kim M."/>
            <person name="Jin S."/>
            <person name="Tallon L."/>
            <person name="Ciecko A."/>
            <person name="Pai G."/>
            <person name="Van Aken S."/>
            <person name="Utterback T."/>
            <person name="Reidmuller S."/>
            <person name="Bormann J."/>
            <person name="Feldblyum T."/>
            <person name="Hsiao J."/>
            <person name="Zismann V."/>
            <person name="Blunt S."/>
            <person name="de Vazeille A.R."/>
            <person name="Shaffer T."/>
            <person name="Koo H."/>
            <person name="Suh B."/>
            <person name="Yang Q."/>
            <person name="Haas B."/>
            <person name="Peterson J."/>
            <person name="Pertea M."/>
            <person name="Volfovsky N."/>
            <person name="Wortman J."/>
            <person name="White O."/>
            <person name="Salzberg S.L."/>
            <person name="Fraser C.M."/>
            <person name="Buell C.R."/>
            <person name="Messing J."/>
            <person name="Song R."/>
            <person name="Fuks G."/>
            <person name="Llaca V."/>
            <person name="Kovchak S."/>
            <person name="Young S."/>
            <person name="Bowers J.E."/>
            <person name="Paterson A.H."/>
            <person name="Johns M.A."/>
            <person name="Mao L."/>
            <person name="Pan H."/>
            <person name="Dean R.A."/>
        </authorList>
    </citation>
    <scope>NUCLEOTIDE SEQUENCE [LARGE SCALE GENOMIC DNA]</scope>
    <source>
        <strain>cv. Nipponbare</strain>
    </source>
</reference>
<reference key="2">
    <citation type="journal article" date="2005" name="Nature">
        <title>The map-based sequence of the rice genome.</title>
        <authorList>
            <consortium name="International rice genome sequencing project (IRGSP)"/>
        </authorList>
    </citation>
    <scope>NUCLEOTIDE SEQUENCE [LARGE SCALE GENOMIC DNA]</scope>
    <source>
        <strain>cv. Nipponbare</strain>
    </source>
</reference>
<reference key="3">
    <citation type="journal article" date="2008" name="Nucleic Acids Res.">
        <title>The rice annotation project database (RAP-DB): 2008 update.</title>
        <authorList>
            <consortium name="The rice annotation project (RAP)"/>
        </authorList>
    </citation>
    <scope>GENOME REANNOTATION</scope>
    <source>
        <strain>cv. Nipponbare</strain>
    </source>
</reference>
<reference key="4">
    <citation type="journal article" date="2013" name="Rice">
        <title>Improvement of the Oryza sativa Nipponbare reference genome using next generation sequence and optical map data.</title>
        <authorList>
            <person name="Kawahara Y."/>
            <person name="de la Bastide M."/>
            <person name="Hamilton J.P."/>
            <person name="Kanamori H."/>
            <person name="McCombie W.R."/>
            <person name="Ouyang S."/>
            <person name="Schwartz D.C."/>
            <person name="Tanaka T."/>
            <person name="Wu J."/>
            <person name="Zhou S."/>
            <person name="Childs K.L."/>
            <person name="Davidson R.M."/>
            <person name="Lin H."/>
            <person name="Quesada-Ocampo L."/>
            <person name="Vaillancourt B."/>
            <person name="Sakai H."/>
            <person name="Lee S.S."/>
            <person name="Kim J."/>
            <person name="Numa H."/>
            <person name="Itoh T."/>
            <person name="Buell C.R."/>
            <person name="Matsumoto T."/>
        </authorList>
    </citation>
    <scope>GENOME REANNOTATION</scope>
    <source>
        <strain>cv. Nipponbare</strain>
    </source>
</reference>
<reference key="5">
    <citation type="journal article" date="2005" name="PLoS Biol.">
        <title>The genomes of Oryza sativa: a history of duplications.</title>
        <authorList>
            <person name="Yu J."/>
            <person name="Wang J."/>
            <person name="Lin W."/>
            <person name="Li S."/>
            <person name="Li H."/>
            <person name="Zhou J."/>
            <person name="Ni P."/>
            <person name="Dong W."/>
            <person name="Hu S."/>
            <person name="Zeng C."/>
            <person name="Zhang J."/>
            <person name="Zhang Y."/>
            <person name="Li R."/>
            <person name="Xu Z."/>
            <person name="Li S."/>
            <person name="Li X."/>
            <person name="Zheng H."/>
            <person name="Cong L."/>
            <person name="Lin L."/>
            <person name="Yin J."/>
            <person name="Geng J."/>
            <person name="Li G."/>
            <person name="Shi J."/>
            <person name="Liu J."/>
            <person name="Lv H."/>
            <person name="Li J."/>
            <person name="Wang J."/>
            <person name="Deng Y."/>
            <person name="Ran L."/>
            <person name="Shi X."/>
            <person name="Wang X."/>
            <person name="Wu Q."/>
            <person name="Li C."/>
            <person name="Ren X."/>
            <person name="Wang J."/>
            <person name="Wang X."/>
            <person name="Li D."/>
            <person name="Liu D."/>
            <person name="Zhang X."/>
            <person name="Ji Z."/>
            <person name="Zhao W."/>
            <person name="Sun Y."/>
            <person name="Zhang Z."/>
            <person name="Bao J."/>
            <person name="Han Y."/>
            <person name="Dong L."/>
            <person name="Ji J."/>
            <person name="Chen P."/>
            <person name="Wu S."/>
            <person name="Liu J."/>
            <person name="Xiao Y."/>
            <person name="Bu D."/>
            <person name="Tan J."/>
            <person name="Yang L."/>
            <person name="Ye C."/>
            <person name="Zhang J."/>
            <person name="Xu J."/>
            <person name="Zhou Y."/>
            <person name="Yu Y."/>
            <person name="Zhang B."/>
            <person name="Zhuang S."/>
            <person name="Wei H."/>
            <person name="Liu B."/>
            <person name="Lei M."/>
            <person name="Yu H."/>
            <person name="Li Y."/>
            <person name="Xu H."/>
            <person name="Wei S."/>
            <person name="He X."/>
            <person name="Fang L."/>
            <person name="Zhang Z."/>
            <person name="Zhang Y."/>
            <person name="Huang X."/>
            <person name="Su Z."/>
            <person name="Tong W."/>
            <person name="Li J."/>
            <person name="Tong Z."/>
            <person name="Li S."/>
            <person name="Ye J."/>
            <person name="Wang L."/>
            <person name="Fang L."/>
            <person name="Lei T."/>
            <person name="Chen C.-S."/>
            <person name="Chen H.-C."/>
            <person name="Xu Z."/>
            <person name="Li H."/>
            <person name="Huang H."/>
            <person name="Zhang F."/>
            <person name="Xu H."/>
            <person name="Li N."/>
            <person name="Zhao C."/>
            <person name="Li S."/>
            <person name="Dong L."/>
            <person name="Huang Y."/>
            <person name="Li L."/>
            <person name="Xi Y."/>
            <person name="Qi Q."/>
            <person name="Li W."/>
            <person name="Zhang B."/>
            <person name="Hu W."/>
            <person name="Zhang Y."/>
            <person name="Tian X."/>
            <person name="Jiao Y."/>
            <person name="Liang X."/>
            <person name="Jin J."/>
            <person name="Gao L."/>
            <person name="Zheng W."/>
            <person name="Hao B."/>
            <person name="Liu S.-M."/>
            <person name="Wang W."/>
            <person name="Yuan L."/>
            <person name="Cao M."/>
            <person name="McDermott J."/>
            <person name="Samudrala R."/>
            <person name="Wang J."/>
            <person name="Wong G.K.-S."/>
            <person name="Yang H."/>
        </authorList>
    </citation>
    <scope>NUCLEOTIDE SEQUENCE [LARGE SCALE GENOMIC DNA]</scope>
    <source>
        <strain>cv. Nipponbare</strain>
    </source>
</reference>
<reference key="6">
    <citation type="journal article" date="2014" name="PLoS ONE">
        <title>Identification and characterization of ABA receptors in Oryza sativa.</title>
        <authorList>
            <person name="He Y."/>
            <person name="Hao Q."/>
            <person name="Li W."/>
            <person name="Yan C."/>
            <person name="Yan N."/>
            <person name="Yin P."/>
        </authorList>
    </citation>
    <scope>FUNCTION</scope>
    <scope>SUBUNIT</scope>
</reference>
<reference key="7">
    <citation type="journal article" date="2015" name="Plant Cell Physiol.">
        <title>ABA regulates subcellular redistribution of OsABI-LIKE2, a negative regulator in ABA signaling, to control root architecture and drought resistance in Oryza sativa.</title>
        <authorList>
            <person name="Li C."/>
            <person name="Shen H."/>
            <person name="Wang T."/>
            <person name="Wang X."/>
        </authorList>
    </citation>
    <scope>FUNCTION</scope>
    <scope>INTERACTION WITH PP2C53</scope>
    <scope>SUBCELLULAR LOCATION</scope>
</reference>
<reference key="8">
    <citation type="journal article" date="2015" name="Rice">
        <title>Characterization and functional analysis of pyrabactin resistance-like abscisic acid receptor family in rice.</title>
        <authorList>
            <person name="Tian X."/>
            <person name="Wang Z."/>
            <person name="Li X."/>
            <person name="Lv T."/>
            <person name="Liu H."/>
            <person name="Wang L."/>
            <person name="Niu H."/>
            <person name="Bu Q."/>
        </authorList>
    </citation>
    <scope>INTERACTION WITH PP2C53</scope>
    <scope>SUBCELLULAR LOCATION</scope>
</reference>
<reference key="9">
    <citation type="journal article" date="2017" name="Mol. Plant">
        <title>Modulation of ABA signaling by altering VxGL motif of PP2Cs in Oryza sativa.</title>
        <authorList>
            <person name="Han S."/>
            <person name="Min M.K."/>
            <person name="Lee S.Y."/>
            <person name="Lim C.W."/>
            <person name="Bhatnagar N."/>
            <person name="Lee Y."/>
            <person name="Shin D."/>
            <person name="Chung K.Y."/>
            <person name="Lee S.C."/>
            <person name="Kim B.G."/>
            <person name="Lee S."/>
        </authorList>
    </citation>
    <scope>INTERACTION WITH PP2C50</scope>
</reference>
<proteinExistence type="evidence at protein level"/>
<sequence length="212" mass="23084">MEQQEEVPPPPAGLGLTAEEYAQVRATVEAHHRYAVGPGQCSSLLAQRIHAPPAAVWAVVRRFDCPQVYKHFIRSCVLRPDPHHDDNGNDLRPGRLREVSVISGLPASTSTERLDLLDDAHRVFGFTITGGEHRLRNYRSVTTVSQLDEICTLVLESYIVDVPDGNTEDDTRLFADTVIRLNLQKLKSVSEANANAAAAAAAPPPPPPAAAE</sequence>
<organism>
    <name type="scientific">Oryza sativa subsp. japonica</name>
    <name type="common">Rice</name>
    <dbReference type="NCBI Taxonomy" id="39947"/>
    <lineage>
        <taxon>Eukaryota</taxon>
        <taxon>Viridiplantae</taxon>
        <taxon>Streptophyta</taxon>
        <taxon>Embryophyta</taxon>
        <taxon>Tracheophyta</taxon>
        <taxon>Spermatophyta</taxon>
        <taxon>Magnoliopsida</taxon>
        <taxon>Liliopsida</taxon>
        <taxon>Poales</taxon>
        <taxon>Poaceae</taxon>
        <taxon>BOP clade</taxon>
        <taxon>Oryzoideae</taxon>
        <taxon>Oryzeae</taxon>
        <taxon>Oryzinae</taxon>
        <taxon>Oryza</taxon>
        <taxon>Oryza sativa</taxon>
    </lineage>
</organism>
<evidence type="ECO:0000250" key="1">
    <source>
        <dbReference type="UniProtKB" id="O49686"/>
    </source>
</evidence>
<evidence type="ECO:0000250" key="2">
    <source>
        <dbReference type="UniProtKB" id="Q8H1R0"/>
    </source>
</evidence>
<evidence type="ECO:0000250" key="3">
    <source>
        <dbReference type="UniProtKB" id="Q8VZS8"/>
    </source>
</evidence>
<evidence type="ECO:0000269" key="4">
    <source>
    </source>
</evidence>
<evidence type="ECO:0000269" key="5">
    <source>
    </source>
</evidence>
<evidence type="ECO:0000269" key="6">
    <source>
    </source>
</evidence>
<evidence type="ECO:0000269" key="7">
    <source>
    </source>
</evidence>
<evidence type="ECO:0000303" key="8">
    <source>
    </source>
</evidence>
<evidence type="ECO:0000303" key="9">
    <source>
    </source>
</evidence>
<evidence type="ECO:0000305" key="10"/>
<evidence type="ECO:0000312" key="11">
    <source>
        <dbReference type="EMBL" id="AAK00445.1"/>
    </source>
</evidence>
<evidence type="ECO:0000312" key="12">
    <source>
        <dbReference type="EMBL" id="AAP55122.1"/>
    </source>
</evidence>
<evidence type="ECO:0000312" key="13">
    <source>
        <dbReference type="EMBL" id="BAF27307.1"/>
    </source>
</evidence>
<evidence type="ECO:0000312" key="14">
    <source>
        <dbReference type="EMBL" id="EAZ17061.1"/>
    </source>
</evidence>
<comment type="function">
    <text evidence="4 6">Inhibits the protein phosphatases PP2C06 and PP2C09 when activated by abscisic acid (ABA) (PubMed:24743650). Together with PP2C53, SAPK8 and SAPK10, may form an ABA signaling module involved in stress response (PubMed:26491145).</text>
</comment>
<comment type="subunit">
    <text evidence="4 5 6 7">Homodimer (PubMed:24743650). Interacts with PP2C53. Binding to PP2C53 is dependent on the presence of abscisic acid (ABA) (PubMed:26362328, PubMed:26491145). Interacts with PP2C50. Binding to PP2C50 is dependent on the presence of ABA (PubMed:28827170).</text>
</comment>
<comment type="subcellular location">
    <subcellularLocation>
        <location evidence="5 6">Cytoplasm</location>
        <location evidence="5 6">Cytosol</location>
    </subcellularLocation>
    <subcellularLocation>
        <location evidence="5 6">Nucleus</location>
    </subcellularLocation>
</comment>
<comment type="similarity">
    <text evidence="10">Belongs to the PYR/PYL/RCAR abscisic acid intracellular receptor family.</text>
</comment>
<feature type="chain" id="PRO_0000444342" description="Abscisic acid receptor PYL10">
    <location>
        <begin position="1"/>
        <end position="212"/>
    </location>
</feature>
<feature type="region of interest" description="START-like" evidence="2">
    <location>
        <begin position="34"/>
        <end position="191"/>
    </location>
</feature>
<feature type="short sequence motif" description="Gate loop" evidence="3">
    <location>
        <begin position="103"/>
        <end position="107"/>
    </location>
</feature>
<feature type="short sequence motif" description="Latch loop" evidence="3">
    <location>
        <begin position="133"/>
        <end position="135"/>
    </location>
</feature>
<feature type="binding site" evidence="2">
    <location>
        <position position="70"/>
    </location>
    <ligand>
        <name>abscisate</name>
        <dbReference type="ChEBI" id="CHEBI:62432"/>
    </ligand>
</feature>
<feature type="binding site" evidence="1">
    <location>
        <begin position="107"/>
        <end position="112"/>
    </location>
    <ligand>
        <name>abscisate</name>
        <dbReference type="ChEBI" id="CHEBI:62432"/>
    </ligand>
</feature>
<feature type="binding site" evidence="1">
    <location>
        <begin position="134"/>
        <end position="140"/>
    </location>
    <ligand>
        <name>abscisate</name>
        <dbReference type="ChEBI" id="CHEBI:62432"/>
    </ligand>
</feature>
<feature type="binding site" evidence="1">
    <location>
        <position position="156"/>
    </location>
    <ligand>
        <name>abscisate</name>
        <dbReference type="ChEBI" id="CHEBI:62432"/>
    </ligand>
</feature>
<feature type="site" description="Involved in interactions with PP2Cs" evidence="1">
    <location>
        <position position="106"/>
    </location>
</feature>
<feature type="site" description="Involved in interactions with PP2Cs" evidence="1">
    <location>
        <position position="167"/>
    </location>
</feature>
<protein>
    <recommendedName>
        <fullName evidence="10">Abscisic acid receptor PYL10</fullName>
    </recommendedName>
    <alternativeName>
        <fullName evidence="8">PYR1-like protein 1</fullName>
        <shortName evidence="8">OsPYL1</shortName>
    </alternativeName>
    <alternativeName>
        <fullName evidence="9">PYR1-like protein 10</fullName>
        <shortName evidence="9">OsPYL10</shortName>
    </alternativeName>
    <alternativeName>
        <fullName evidence="10">Regulatory components of ABA receptor 10</fullName>
    </alternativeName>
</protein>
<name>PYL10_ORYSJ</name>